<reference key="1">
    <citation type="submission" date="2010-04" db="EMBL/GenBank/DDBJ databases">
        <title>The genome sequence of Listeria monocytogenes strain 10403S.</title>
        <authorList>
            <consortium name="The Broad Institute Genome Sequencing Platform"/>
            <consortium name="The Broad Institute Genome Sequencing Center for Infectious Disease"/>
            <person name="Borowsky M."/>
            <person name="Borodovsky M."/>
            <person name="Young S.K."/>
            <person name="Zeng Q."/>
            <person name="Koehrsen M."/>
            <person name="Fitzgerald M."/>
            <person name="Wiedmann M."/>
            <person name="Swaminathan B."/>
            <person name="Lauer P."/>
            <person name="Portnoy D."/>
            <person name="Cossart P."/>
            <person name="Buchrieser C."/>
            <person name="Higgins D."/>
            <person name="Abouelleil A."/>
            <person name="Alvarado L."/>
            <person name="Arachchi H.M."/>
            <person name="Berlin A."/>
            <person name="Borenstein D."/>
            <person name="Brown A."/>
            <person name="Chapman S.B."/>
            <person name="Chen Z."/>
            <person name="Dunbar C.D."/>
            <person name="Engels R."/>
            <person name="Freedman E."/>
            <person name="Gearin G."/>
            <person name="Gellesch M."/>
            <person name="Goldberg J."/>
            <person name="Griggs A."/>
            <person name="Gujja S."/>
            <person name="Heilman E."/>
            <person name="Heiman D."/>
            <person name="Howarth C."/>
            <person name="Jen D."/>
            <person name="Larson L."/>
            <person name="Lui A."/>
            <person name="MacDonald J."/>
            <person name="Mehta T."/>
            <person name="Montmayeur A."/>
            <person name="Neiman D."/>
            <person name="Park D."/>
            <person name="Pearson M."/>
            <person name="Priest M."/>
            <person name="Richards J."/>
            <person name="Roberts A."/>
            <person name="Saif S."/>
            <person name="Shea T."/>
            <person name="Shenoy N."/>
            <person name="Sisk P."/>
            <person name="Stolte C."/>
            <person name="Sykes S."/>
            <person name="Walk T."/>
            <person name="White J."/>
            <person name="Yandava C."/>
            <person name="Haas B."/>
            <person name="Nusbaum C."/>
            <person name="Birren B."/>
        </authorList>
    </citation>
    <scope>NUCLEOTIDE SEQUENCE [LARGE SCALE GENOMIC DNA]</scope>
    <source>
        <strain>10403S</strain>
    </source>
</reference>
<reference key="2">
    <citation type="journal article" date="2002" name="Appl. Environ. Microbiol.">
        <title>Identification of opuC as a chill-activated and osmotically activated carnitine transporter in Listeria monocytogenes.</title>
        <authorList>
            <person name="Angelidis A.S."/>
            <person name="Smith L.T."/>
            <person name="Hoffman L.M."/>
            <person name="Smith G.M."/>
        </authorList>
    </citation>
    <scope>FUNCTION</scope>
    <scope>INDUCTION</scope>
    <scope>SUBUNIT</scope>
    <source>
        <strain>10403S</strain>
    </source>
</reference>
<reference key="3">
    <citation type="journal article" date="2002" name="Appl. Environ. Microbiol.">
        <title>Gbu glycine betaine porter and carnitine uptake in osmotically stressed Listeria monocytogenes cells.</title>
        <authorList>
            <person name="Mendum M.L."/>
            <person name="Smith L.T."/>
        </authorList>
    </citation>
    <scope>FUNCTION IN CARNITINE UPTAKE</scope>
    <source>
        <strain>10403S</strain>
    </source>
</reference>
<reference key="4">
    <citation type="journal article" date="2003" name="Appl. Environ. Microbiol.">
        <title>Three transporters mediate uptake of glycine betaine and carnitine by Listeria monocytogenes in response to hyperosmotic stress.</title>
        <authorList>
            <person name="Angelidis A.S."/>
            <person name="Smith G.M."/>
        </authorList>
    </citation>
    <scope>FUNCTION IN CARNITINE AND GLYCINE BETAINE UPTAKE</scope>
    <scope>INDUCTION</scope>
    <source>
        <strain>10403S</strain>
    </source>
</reference>
<reference key="5">
    <citation type="journal article" date="2003" name="Appl. Environ. Microbiol.">
        <title>Role of sigmaB in regulating the compatible solute uptake systems of Listeria monocytogenes: osmotic induction of opuC is sigmaB dependent.</title>
        <authorList>
            <person name="Fraser K.R."/>
            <person name="Sue D."/>
            <person name="Wiedmann M."/>
            <person name="Boor K."/>
            <person name="O'Byrne C.P."/>
        </authorList>
    </citation>
    <scope>INDUCTION</scope>
    <source>
        <strain>10403S</strain>
    </source>
</reference>
<evidence type="ECO:0000255" key="1">
    <source>
        <dbReference type="PROSITE-ProRule" id="PRU00434"/>
    </source>
</evidence>
<evidence type="ECO:0000255" key="2">
    <source>
        <dbReference type="PROSITE-ProRule" id="PRU00703"/>
    </source>
</evidence>
<evidence type="ECO:0000256" key="3">
    <source>
        <dbReference type="SAM" id="MobiDB-lite"/>
    </source>
</evidence>
<evidence type="ECO:0000269" key="4">
    <source>
    </source>
</evidence>
<evidence type="ECO:0000269" key="5">
    <source>
    </source>
</evidence>
<evidence type="ECO:0000269" key="6">
    <source>
    </source>
</evidence>
<evidence type="ECO:0000269" key="7">
    <source>
    </source>
</evidence>
<evidence type="ECO:0000305" key="8"/>
<evidence type="ECO:0000305" key="9">
    <source>
    </source>
</evidence>
<keyword id="KW-0067">ATP-binding</keyword>
<keyword id="KW-0129">CBS domain</keyword>
<keyword id="KW-0547">Nucleotide-binding</keyword>
<keyword id="KW-0677">Repeat</keyword>
<keyword id="KW-0346">Stress response</keyword>
<keyword id="KW-1278">Translocase</keyword>
<keyword id="KW-0813">Transport</keyword>
<name>OPUCA_LISM4</name>
<feature type="chain" id="PRO_0000418133" description="Carnitine transport ATP-binding protein OpuCA">
    <location>
        <begin position="1"/>
        <end position="397"/>
    </location>
</feature>
<feature type="domain" description="ABC transporter" evidence="1">
    <location>
        <begin position="2"/>
        <end position="236"/>
    </location>
</feature>
<feature type="domain" description="CBS 1" evidence="2">
    <location>
        <begin position="255"/>
        <end position="311"/>
    </location>
</feature>
<feature type="domain" description="CBS 2" evidence="2">
    <location>
        <begin position="315"/>
        <end position="373"/>
    </location>
</feature>
<feature type="region of interest" description="Disordered" evidence="3">
    <location>
        <begin position="377"/>
        <end position="397"/>
    </location>
</feature>
<feature type="compositionally biased region" description="Basic and acidic residues" evidence="3">
    <location>
        <begin position="384"/>
        <end position="397"/>
    </location>
</feature>
<feature type="binding site" evidence="1">
    <location>
        <begin position="35"/>
        <end position="42"/>
    </location>
    <ligand>
        <name>ATP</name>
        <dbReference type="ChEBI" id="CHEBI:30616"/>
    </ligand>
</feature>
<sequence length="397" mass="45209">MLKFEHVTKTYKGGKKAVNDLTLNIDKGEFVCFIGPSGCGKTTTMKMINRLIEPTEGKIFINDKDIMAEDPVKLRRSIGYVIQQIGLMPHMTIRENIVLVPKLLKWSEEKKQERAKELIKLVDLPEEFLDRYPYELSGGQQQRIGVLRALAAEQNLILMDEPFGALDPITRDSLQEEFKNLQKELGKTIIFVTHDMDEAIKLADRIVIMKDGEIVQFDTPDEILRNPANSFVEDFIGKDRLIEAKPDVTQVAQIMNTNPVSITADKSLQAAITVMKEKRVDTLLVVDEGNVLKGFIDVEQIDLNRRTATSVMDIIEKNVFYVYEDTLLRDTVQRILKRGYKYIPVVDKDKRLVGIVTRASLVDIVYDSIWGTLEDATENQEEQADSKTTEPEMKQEG</sequence>
<proteinExistence type="evidence at protein level"/>
<dbReference type="EC" id="7.6.2.9"/>
<dbReference type="EMBL" id="CP002002">
    <property type="protein sequence ID" value="AEO06413.1"/>
    <property type="molecule type" value="Genomic_DNA"/>
</dbReference>
<dbReference type="RefSeq" id="WP_003721933.1">
    <property type="nucleotide sequence ID" value="NC_017544.1"/>
</dbReference>
<dbReference type="SMR" id="G2JZ44"/>
<dbReference type="KEGG" id="lmt:LMRG_00880"/>
<dbReference type="HOGENOM" id="CLU_000604_2_2_9"/>
<dbReference type="Proteomes" id="UP000001288">
    <property type="component" value="Chromosome"/>
</dbReference>
<dbReference type="GO" id="GO:0016020">
    <property type="term" value="C:membrane"/>
    <property type="evidence" value="ECO:0007669"/>
    <property type="project" value="InterPro"/>
</dbReference>
<dbReference type="GO" id="GO:0015418">
    <property type="term" value="F:ABC-type quaternary ammonium compound transporting activity"/>
    <property type="evidence" value="ECO:0007669"/>
    <property type="project" value="UniProtKB-EC"/>
</dbReference>
<dbReference type="GO" id="GO:0005524">
    <property type="term" value="F:ATP binding"/>
    <property type="evidence" value="ECO:0007669"/>
    <property type="project" value="UniProtKB-KW"/>
</dbReference>
<dbReference type="GO" id="GO:0016887">
    <property type="term" value="F:ATP hydrolysis activity"/>
    <property type="evidence" value="ECO:0007669"/>
    <property type="project" value="InterPro"/>
</dbReference>
<dbReference type="GO" id="GO:0031460">
    <property type="term" value="P:glycine betaine transport"/>
    <property type="evidence" value="ECO:0007669"/>
    <property type="project" value="InterPro"/>
</dbReference>
<dbReference type="CDD" id="cd03295">
    <property type="entry name" value="ABC_OpuCA_Osmoprotection"/>
    <property type="match status" value="1"/>
</dbReference>
<dbReference type="CDD" id="cd04583">
    <property type="entry name" value="CBS_pair_ABC_OpuCA_assoc"/>
    <property type="match status" value="1"/>
</dbReference>
<dbReference type="FunFam" id="3.40.50.300:FF:000425">
    <property type="entry name" value="Probable ABC transporter, ATP-binding subunit"/>
    <property type="match status" value="1"/>
</dbReference>
<dbReference type="Gene3D" id="3.10.580.10">
    <property type="entry name" value="CBS-domain"/>
    <property type="match status" value="1"/>
</dbReference>
<dbReference type="Gene3D" id="3.40.50.300">
    <property type="entry name" value="P-loop containing nucleotide triphosphate hydrolases"/>
    <property type="match status" value="1"/>
</dbReference>
<dbReference type="InterPro" id="IPR003593">
    <property type="entry name" value="AAA+_ATPase"/>
</dbReference>
<dbReference type="InterPro" id="IPR003439">
    <property type="entry name" value="ABC_transporter-like_ATP-bd"/>
</dbReference>
<dbReference type="InterPro" id="IPR017871">
    <property type="entry name" value="ABC_transporter-like_CS"/>
</dbReference>
<dbReference type="InterPro" id="IPR000644">
    <property type="entry name" value="CBS_dom"/>
</dbReference>
<dbReference type="InterPro" id="IPR046342">
    <property type="entry name" value="CBS_dom_sf"/>
</dbReference>
<dbReference type="InterPro" id="IPR005892">
    <property type="entry name" value="Gly-betaine_transp_ATP-bd"/>
</dbReference>
<dbReference type="InterPro" id="IPR027417">
    <property type="entry name" value="P-loop_NTPase"/>
</dbReference>
<dbReference type="NCBIfam" id="TIGR01186">
    <property type="entry name" value="proV"/>
    <property type="match status" value="1"/>
</dbReference>
<dbReference type="PANTHER" id="PTHR43117:SF3">
    <property type="entry name" value="CHOLINE TRANSPORT ATP-BINDING PROTEIN OPUBA"/>
    <property type="match status" value="1"/>
</dbReference>
<dbReference type="PANTHER" id="PTHR43117">
    <property type="entry name" value="OSMOPROTECTANT IMPORT ATP-BINDING PROTEIN OSMV"/>
    <property type="match status" value="1"/>
</dbReference>
<dbReference type="Pfam" id="PF00005">
    <property type="entry name" value="ABC_tran"/>
    <property type="match status" value="1"/>
</dbReference>
<dbReference type="Pfam" id="PF00571">
    <property type="entry name" value="CBS"/>
    <property type="match status" value="2"/>
</dbReference>
<dbReference type="SMART" id="SM00382">
    <property type="entry name" value="AAA"/>
    <property type="match status" value="1"/>
</dbReference>
<dbReference type="SMART" id="SM00116">
    <property type="entry name" value="CBS"/>
    <property type="match status" value="2"/>
</dbReference>
<dbReference type="SUPFAM" id="SSF54631">
    <property type="entry name" value="CBS-domain pair"/>
    <property type="match status" value="1"/>
</dbReference>
<dbReference type="SUPFAM" id="SSF52540">
    <property type="entry name" value="P-loop containing nucleoside triphosphate hydrolases"/>
    <property type="match status" value="1"/>
</dbReference>
<dbReference type="PROSITE" id="PS00211">
    <property type="entry name" value="ABC_TRANSPORTER_1"/>
    <property type="match status" value="1"/>
</dbReference>
<dbReference type="PROSITE" id="PS50893">
    <property type="entry name" value="ABC_TRANSPORTER_2"/>
    <property type="match status" value="1"/>
</dbReference>
<dbReference type="PROSITE" id="PS51371">
    <property type="entry name" value="CBS"/>
    <property type="match status" value="2"/>
</dbReference>
<organism>
    <name type="scientific">Listeria monocytogenes serotype 1/2a (strain 10403S)</name>
    <dbReference type="NCBI Taxonomy" id="393133"/>
    <lineage>
        <taxon>Bacteria</taxon>
        <taxon>Bacillati</taxon>
        <taxon>Bacillota</taxon>
        <taxon>Bacilli</taxon>
        <taxon>Bacillales</taxon>
        <taxon>Listeriaceae</taxon>
        <taxon>Listeria</taxon>
    </lineage>
</organism>
<comment type="function">
    <text evidence="4 5 6">Part of the ABC transporter complex OpuCABCD involved in carnitine uptake. Probably responsible for energy coupling to the transport system. Involved, with BetL and GbuABC, in osmoprotection and cryoprotection of Listeria. Can also mediate weak glycine betaine transport.</text>
</comment>
<comment type="catalytic activity">
    <reaction>
        <text>a quaternary ammonium(out) + ATP + H2O = a quaternary ammonium(in) + ADP + phosphate + H(+)</text>
        <dbReference type="Rhea" id="RHEA:11036"/>
        <dbReference type="ChEBI" id="CHEBI:15377"/>
        <dbReference type="ChEBI" id="CHEBI:15378"/>
        <dbReference type="ChEBI" id="CHEBI:30616"/>
        <dbReference type="ChEBI" id="CHEBI:35267"/>
        <dbReference type="ChEBI" id="CHEBI:43474"/>
        <dbReference type="ChEBI" id="CHEBI:456216"/>
        <dbReference type="EC" id="7.6.2.9"/>
    </reaction>
</comment>
<comment type="subunit">
    <text evidence="9">The complex is composed of two ATP-binding proteins (OpuCA), two transmembrane proteins (OpuCB and OpuCD) and a solute-binding protein (OpuCC).</text>
</comment>
<comment type="induction">
    <text evidence="4 6 7">The complex is induced by either hyperosmotic stress or by low temperature. Osmotic induction is sigma B-dependent.</text>
</comment>
<comment type="similarity">
    <text evidence="8">Belongs to the ABC transporter superfamily.</text>
</comment>
<protein>
    <recommendedName>
        <fullName>Carnitine transport ATP-binding protein OpuCA</fullName>
        <ecNumber>7.6.2.9</ecNumber>
    </recommendedName>
</protein>
<gene>
    <name type="primary">opuCA</name>
    <name type="ordered locus">LMRG_00880</name>
</gene>
<accession>G2JZ44</accession>